<reference key="1">
    <citation type="journal article" date="1986" name="Nucleic Acids Res.">
        <title>Sequences coding for the ribosomal protein L14 in Xenopus laevis and Xenopus tropicalis; homologies in the 5' untranslated region are shared with other r-protein mRNAs.</title>
        <authorList>
            <person name="Beccari E."/>
            <person name="Mazzetti P."/>
            <person name="Mileo A.M."/>
            <person name="Bozzoni I."/>
            <person name="Pierandrei-Amaldi P."/>
            <person name="Amaldi F."/>
        </authorList>
    </citation>
    <scope>NUCLEOTIDE SEQUENCE [MRNA]</scope>
    <source>
        <tissue>Oocyte</tissue>
    </source>
</reference>
<reference key="2">
    <citation type="journal article" date="1987" name="Nucleic Acids Res.">
        <title>The nucleotide sequence of the ribosomal protein L14 gene of Xenopus laevis.</title>
        <authorList>
            <person name="Beccari E."/>
            <person name="Mazzetti P."/>
        </authorList>
    </citation>
    <scope>NUCLEOTIDE SEQUENCE [GENOMIC DNA]</scope>
</reference>
<reference key="3">
    <citation type="journal article" date="1982" name="Gene">
        <title>Nucleotide sequences of cloned cDNA fragments specific for six Xenopus laevis ribosomal proteins.</title>
        <authorList>
            <person name="Amaldi F."/>
            <person name="Beccari E."/>
            <person name="Bozzoni I."/>
            <person name="Luo Z.-X."/>
            <person name="Pierandrei-Amaldi P."/>
        </authorList>
    </citation>
    <scope>NUCLEOTIDE SEQUENCE [MRNA] OF 33-188</scope>
</reference>
<sequence length="188" mass="21728">MGIDIRHNKDRKVRRKEPKSQDIYLRLLVKLYRFLARRTNSSFNRVVLKRLFMSRTNRPPLSMSRLIRKMKLQGRENKTAVVVGYITDDVRIHDIPKLKVCALKITSGDRSRILKSGGQIMTFDQLALAAPKGQNTVLLSGPRKAREVYRHFGKAPGTPHSRTKPYVLSKGRKFERARGRRASRGYKN</sequence>
<organism>
    <name type="scientific">Xenopus laevis</name>
    <name type="common">African clawed frog</name>
    <dbReference type="NCBI Taxonomy" id="8355"/>
    <lineage>
        <taxon>Eukaryota</taxon>
        <taxon>Metazoa</taxon>
        <taxon>Chordata</taxon>
        <taxon>Craniata</taxon>
        <taxon>Vertebrata</taxon>
        <taxon>Euteleostomi</taxon>
        <taxon>Amphibia</taxon>
        <taxon>Batrachia</taxon>
        <taxon>Anura</taxon>
        <taxon>Pipoidea</taxon>
        <taxon>Pipidae</taxon>
        <taxon>Xenopodinae</taxon>
        <taxon>Xenopus</taxon>
        <taxon>Xenopus</taxon>
    </lineage>
</organism>
<gene>
    <name type="primary">rpl18-b</name>
    <name type="synonym">rpl14b</name>
</gene>
<proteinExistence type="evidence at transcript level"/>
<accession>P02412</accession>
<dbReference type="EMBL" id="X06223">
    <property type="protein sequence ID" value="CAB40827.1"/>
    <property type="molecule type" value="mRNA"/>
</dbReference>
<dbReference type="EMBL" id="X05025">
    <property type="protein sequence ID" value="CAA28689.1"/>
    <property type="molecule type" value="Genomic_DNA"/>
</dbReference>
<dbReference type="EMBL" id="V01439">
    <property type="protein sequence ID" value="CAA24700.1"/>
    <property type="molecule type" value="mRNA"/>
</dbReference>
<dbReference type="PIR" id="B25766">
    <property type="entry name" value="R5XL14"/>
</dbReference>
<dbReference type="SMR" id="P02412"/>
<dbReference type="AGR" id="Xenbase:XB-GENE-6255773"/>
<dbReference type="Xenbase" id="XB-GENE-6255773">
    <property type="gene designation" value="rpl18.L"/>
</dbReference>
<dbReference type="Proteomes" id="UP000186698">
    <property type="component" value="Unplaced"/>
</dbReference>
<dbReference type="GO" id="GO:0022625">
    <property type="term" value="C:cytosolic large ribosomal subunit"/>
    <property type="evidence" value="ECO:0000250"/>
    <property type="project" value="UniProtKB"/>
</dbReference>
<dbReference type="GO" id="GO:0005791">
    <property type="term" value="C:rough endoplasmic reticulum"/>
    <property type="evidence" value="ECO:0007669"/>
    <property type="project" value="UniProtKB-SubCell"/>
</dbReference>
<dbReference type="GO" id="GO:0003723">
    <property type="term" value="F:RNA binding"/>
    <property type="evidence" value="ECO:0000318"/>
    <property type="project" value="GO_Central"/>
</dbReference>
<dbReference type="GO" id="GO:0003735">
    <property type="term" value="F:structural constituent of ribosome"/>
    <property type="evidence" value="ECO:0000318"/>
    <property type="project" value="GO_Central"/>
</dbReference>
<dbReference type="GO" id="GO:0002181">
    <property type="term" value="P:cytoplasmic translation"/>
    <property type="evidence" value="ECO:0000250"/>
    <property type="project" value="UniProtKB"/>
</dbReference>
<dbReference type="FunFam" id="3.100.10.10:FF:000001">
    <property type="entry name" value="60S ribosomal protein L18"/>
    <property type="match status" value="1"/>
</dbReference>
<dbReference type="Gene3D" id="3.100.10.10">
    <property type="match status" value="1"/>
</dbReference>
<dbReference type="InterPro" id="IPR000039">
    <property type="entry name" value="Ribosomal_eL18"/>
</dbReference>
<dbReference type="InterPro" id="IPR021132">
    <property type="entry name" value="Ribosomal_eL18/eL18-A/B/_CS"/>
</dbReference>
<dbReference type="InterPro" id="IPR021131">
    <property type="entry name" value="Ribosomal_uL15/eL18"/>
</dbReference>
<dbReference type="InterPro" id="IPR036227">
    <property type="entry name" value="Ribosomal_uL15/eL18_sf"/>
</dbReference>
<dbReference type="PANTHER" id="PTHR10934">
    <property type="entry name" value="60S RIBOSOMAL PROTEIN L18"/>
    <property type="match status" value="1"/>
</dbReference>
<dbReference type="PANTHER" id="PTHR10934:SF2">
    <property type="entry name" value="LARGE RIBOSOMAL SUBUNIT PROTEIN EL18"/>
    <property type="match status" value="1"/>
</dbReference>
<dbReference type="Pfam" id="PF17135">
    <property type="entry name" value="Ribosomal_L18"/>
    <property type="match status" value="1"/>
</dbReference>
<dbReference type="SUPFAM" id="SSF52080">
    <property type="entry name" value="Ribosomal proteins L15p and L18e"/>
    <property type="match status" value="1"/>
</dbReference>
<dbReference type="PROSITE" id="PS01106">
    <property type="entry name" value="RIBOSOMAL_L18E"/>
    <property type="match status" value="1"/>
</dbReference>
<keyword id="KW-0963">Cytoplasm</keyword>
<keyword id="KW-0256">Endoplasmic reticulum</keyword>
<keyword id="KW-1185">Reference proteome</keyword>
<keyword id="KW-0687">Ribonucleoprotein</keyword>
<keyword id="KW-0689">Ribosomal protein</keyword>
<name>RL18B_XENLA</name>
<evidence type="ECO:0000250" key="1">
    <source>
        <dbReference type="UniProtKB" id="Q07020"/>
    </source>
</evidence>
<evidence type="ECO:0000250" key="2">
    <source>
        <dbReference type="UniProtKB" id="Q95342"/>
    </source>
</evidence>
<evidence type="ECO:0000256" key="3">
    <source>
        <dbReference type="SAM" id="MobiDB-lite"/>
    </source>
</evidence>
<evidence type="ECO:0000305" key="4"/>
<protein>
    <recommendedName>
        <fullName evidence="4">Large ribosomal subunit protein eL18B</fullName>
    </recommendedName>
    <alternativeName>
        <fullName>60S ribosomal protein L18-B</fullName>
    </alternativeName>
    <alternativeName>
        <fullName>L14B</fullName>
    </alternativeName>
</protein>
<feature type="chain" id="PRO_0000132774" description="Large ribosomal subunit protein eL18B">
    <location>
        <begin position="1"/>
        <end position="188"/>
    </location>
</feature>
<feature type="region of interest" description="Disordered" evidence="3">
    <location>
        <begin position="153"/>
        <end position="188"/>
    </location>
</feature>
<feature type="compositionally biased region" description="Basic residues" evidence="3">
    <location>
        <begin position="178"/>
        <end position="188"/>
    </location>
</feature>
<feature type="sequence conflict" description="In Ref. 3; CAA24700." evidence="4" ref="3">
    <original>RF</original>
    <variation>DI</variation>
    <location>
        <begin position="33"/>
        <end position="34"/>
    </location>
</feature>
<feature type="sequence conflict" description="In Ref. 2; CAA28689." evidence="4" ref="2">
    <original>Y</original>
    <variation>C</variation>
    <location>
        <position position="85"/>
    </location>
</feature>
<feature type="sequence conflict" description="In Ref. 2; CAA28689." evidence="4" ref="2">
    <original>P</original>
    <variation>L</variation>
    <location>
        <position position="156"/>
    </location>
</feature>
<feature type="sequence conflict" description="In Ref. 1; CAB40827." evidence="4" ref="1">
    <original>G</original>
    <variation>S</variation>
    <location>
        <position position="157"/>
    </location>
</feature>
<comment type="function">
    <text evidence="1">Component of the large ribosomal subunit. The ribosome is a large ribonucleoprotein complex responsible for the synthesis of proteins in the cell.</text>
</comment>
<comment type="subunit">
    <text evidence="1">Component of the large ribosomal subunit.</text>
</comment>
<comment type="subcellular location">
    <subcellularLocation>
        <location evidence="1">Cytoplasm</location>
        <location evidence="1">Cytosol</location>
    </subcellularLocation>
    <subcellularLocation>
        <location evidence="1">Cytoplasm</location>
    </subcellularLocation>
    <subcellularLocation>
        <location evidence="2">Rough endoplasmic reticulum</location>
    </subcellularLocation>
    <text evidence="1 2">Detected on cytosolic polysomes (By similarity). Detected in ribosomes that are associated with the rough endoplasmic reticulum (By similarity).</text>
</comment>
<comment type="similarity">
    <text evidence="4">Belongs to the eukaryotic ribosomal protein eL18 family.</text>
</comment>